<protein>
    <recommendedName>
        <fullName evidence="1">Fructose-1,6-bisphosphatase class 1</fullName>
        <shortName evidence="1">FBPase class 1</shortName>
        <ecNumber evidence="1">3.1.3.11</ecNumber>
    </recommendedName>
    <alternativeName>
        <fullName evidence="1">D-fructose-1,6-bisphosphate 1-phosphohydrolase class 1</fullName>
    </alternativeName>
</protein>
<sequence>MKTLGEFIVEKQHDFPHATGELTALLSAIKLGAKIIHRDINKAGLVDILGTSGAENVQGEVQMKLDLFANEKLKAALKARGQVAGIASEEEDEIVVFEGVENGKYVVLMDPLDGSSNIDVNVSVGTIFSIYRRITPLGTPVTKEDFLQPGNKQVAAGYVVYGSSTMLVYTTGCGVHAFTYDPSLGVFCLSHESVRFPATGQMYSINEGNYIKFPNGVKKYIKYCQEMDEATHRPYTSRYIGSLVSDFHRNLLKGGIYLYPSTATHPNGKLRLAYECNPIAFLAEQAGGKASDGKNRILDIQPHELHQRSAFFTGTESMVNDVERFIRDYPDNV</sequence>
<feature type="chain" id="PRO_0000364721" description="Fructose-1,6-bisphosphatase class 1">
    <location>
        <begin position="1"/>
        <end position="333"/>
    </location>
</feature>
<feature type="binding site" evidence="1">
    <location>
        <position position="89"/>
    </location>
    <ligand>
        <name>Mg(2+)</name>
        <dbReference type="ChEBI" id="CHEBI:18420"/>
        <label>1</label>
    </ligand>
</feature>
<feature type="binding site" evidence="1">
    <location>
        <position position="110"/>
    </location>
    <ligand>
        <name>Mg(2+)</name>
        <dbReference type="ChEBI" id="CHEBI:18420"/>
        <label>1</label>
    </ligand>
</feature>
<feature type="binding site" evidence="1">
    <location>
        <position position="110"/>
    </location>
    <ligand>
        <name>Mg(2+)</name>
        <dbReference type="ChEBI" id="CHEBI:18420"/>
        <label>2</label>
    </ligand>
</feature>
<feature type="binding site" evidence="1">
    <location>
        <position position="112"/>
    </location>
    <ligand>
        <name>Mg(2+)</name>
        <dbReference type="ChEBI" id="CHEBI:18420"/>
        <label>1</label>
    </ligand>
</feature>
<feature type="binding site" evidence="1">
    <location>
        <begin position="113"/>
        <end position="116"/>
    </location>
    <ligand>
        <name>substrate</name>
    </ligand>
</feature>
<feature type="binding site" evidence="1">
    <location>
        <position position="113"/>
    </location>
    <ligand>
        <name>Mg(2+)</name>
        <dbReference type="ChEBI" id="CHEBI:18420"/>
        <label>2</label>
    </ligand>
</feature>
<feature type="binding site" evidence="1">
    <location>
        <position position="206"/>
    </location>
    <ligand>
        <name>substrate</name>
    </ligand>
</feature>
<feature type="binding site" evidence="1">
    <location>
        <position position="239"/>
    </location>
    <ligand>
        <name>substrate</name>
    </ligand>
</feature>
<feature type="binding site" evidence="1">
    <location>
        <begin position="257"/>
        <end position="259"/>
    </location>
    <ligand>
        <name>substrate</name>
    </ligand>
</feature>
<feature type="binding site" evidence="1">
    <location>
        <position position="269"/>
    </location>
    <ligand>
        <name>substrate</name>
    </ligand>
</feature>
<feature type="binding site" evidence="1">
    <location>
        <position position="275"/>
    </location>
    <ligand>
        <name>Mg(2+)</name>
        <dbReference type="ChEBI" id="CHEBI:18420"/>
        <label>2</label>
    </ligand>
</feature>
<dbReference type="EC" id="3.1.3.11" evidence="1"/>
<dbReference type="EMBL" id="AP008232">
    <property type="protein sequence ID" value="BAE73631.1"/>
    <property type="molecule type" value="Genomic_DNA"/>
</dbReference>
<dbReference type="RefSeq" id="WP_011410219.1">
    <property type="nucleotide sequence ID" value="NC_007712.1"/>
</dbReference>
<dbReference type="SMR" id="Q2NW44"/>
<dbReference type="STRING" id="343509.SG0356"/>
<dbReference type="KEGG" id="sgl:SG0356"/>
<dbReference type="eggNOG" id="COG0158">
    <property type="taxonomic scope" value="Bacteria"/>
</dbReference>
<dbReference type="HOGENOM" id="CLU_039977_2_2_6"/>
<dbReference type="OrthoDB" id="9806756at2"/>
<dbReference type="UniPathway" id="UPA00138"/>
<dbReference type="Proteomes" id="UP000001932">
    <property type="component" value="Chromosome"/>
</dbReference>
<dbReference type="GO" id="GO:0005829">
    <property type="term" value="C:cytosol"/>
    <property type="evidence" value="ECO:0007669"/>
    <property type="project" value="TreeGrafter"/>
</dbReference>
<dbReference type="GO" id="GO:0042132">
    <property type="term" value="F:fructose 1,6-bisphosphate 1-phosphatase activity"/>
    <property type="evidence" value="ECO:0007669"/>
    <property type="project" value="UniProtKB-UniRule"/>
</dbReference>
<dbReference type="GO" id="GO:0000287">
    <property type="term" value="F:magnesium ion binding"/>
    <property type="evidence" value="ECO:0007669"/>
    <property type="project" value="UniProtKB-UniRule"/>
</dbReference>
<dbReference type="GO" id="GO:0030388">
    <property type="term" value="P:fructose 1,6-bisphosphate metabolic process"/>
    <property type="evidence" value="ECO:0007669"/>
    <property type="project" value="TreeGrafter"/>
</dbReference>
<dbReference type="GO" id="GO:0006002">
    <property type="term" value="P:fructose 6-phosphate metabolic process"/>
    <property type="evidence" value="ECO:0007669"/>
    <property type="project" value="TreeGrafter"/>
</dbReference>
<dbReference type="GO" id="GO:0006000">
    <property type="term" value="P:fructose metabolic process"/>
    <property type="evidence" value="ECO:0007669"/>
    <property type="project" value="TreeGrafter"/>
</dbReference>
<dbReference type="GO" id="GO:0006094">
    <property type="term" value="P:gluconeogenesis"/>
    <property type="evidence" value="ECO:0007669"/>
    <property type="project" value="UniProtKB-UniRule"/>
</dbReference>
<dbReference type="GO" id="GO:0005986">
    <property type="term" value="P:sucrose biosynthetic process"/>
    <property type="evidence" value="ECO:0007669"/>
    <property type="project" value="TreeGrafter"/>
</dbReference>
<dbReference type="CDD" id="cd00354">
    <property type="entry name" value="FBPase"/>
    <property type="match status" value="1"/>
</dbReference>
<dbReference type="FunFam" id="3.30.540.10:FF:000002">
    <property type="entry name" value="Fructose-1,6-bisphosphatase class 1"/>
    <property type="match status" value="1"/>
</dbReference>
<dbReference type="FunFam" id="3.40.190.80:FF:000001">
    <property type="entry name" value="Fructose-1,6-bisphosphatase class 1"/>
    <property type="match status" value="1"/>
</dbReference>
<dbReference type="Gene3D" id="3.40.190.80">
    <property type="match status" value="1"/>
</dbReference>
<dbReference type="Gene3D" id="3.30.540.10">
    <property type="entry name" value="Fructose-1,6-Bisphosphatase, subunit A, domain 1"/>
    <property type="match status" value="1"/>
</dbReference>
<dbReference type="HAMAP" id="MF_01855">
    <property type="entry name" value="FBPase_class1"/>
    <property type="match status" value="1"/>
</dbReference>
<dbReference type="InterPro" id="IPR044015">
    <property type="entry name" value="FBPase_C_dom"/>
</dbReference>
<dbReference type="InterPro" id="IPR000146">
    <property type="entry name" value="FBPase_class-1"/>
</dbReference>
<dbReference type="InterPro" id="IPR033391">
    <property type="entry name" value="FBPase_N"/>
</dbReference>
<dbReference type="InterPro" id="IPR028343">
    <property type="entry name" value="FBPtase"/>
</dbReference>
<dbReference type="NCBIfam" id="NF006778">
    <property type="entry name" value="PRK09293.1-1"/>
    <property type="match status" value="1"/>
</dbReference>
<dbReference type="PANTHER" id="PTHR11556">
    <property type="entry name" value="FRUCTOSE-1,6-BISPHOSPHATASE-RELATED"/>
    <property type="match status" value="1"/>
</dbReference>
<dbReference type="PANTHER" id="PTHR11556:SF35">
    <property type="entry name" value="SEDOHEPTULOSE-1,7-BISPHOSPHATASE, CHLOROPLASTIC"/>
    <property type="match status" value="1"/>
</dbReference>
<dbReference type="Pfam" id="PF00316">
    <property type="entry name" value="FBPase"/>
    <property type="match status" value="1"/>
</dbReference>
<dbReference type="Pfam" id="PF18913">
    <property type="entry name" value="FBPase_C"/>
    <property type="match status" value="1"/>
</dbReference>
<dbReference type="PIRSF" id="PIRSF500210">
    <property type="entry name" value="FBPtase"/>
    <property type="match status" value="1"/>
</dbReference>
<dbReference type="PIRSF" id="PIRSF000904">
    <property type="entry name" value="FBPtase_SBPase"/>
    <property type="match status" value="1"/>
</dbReference>
<dbReference type="PRINTS" id="PR00115">
    <property type="entry name" value="F16BPHPHTASE"/>
</dbReference>
<dbReference type="SUPFAM" id="SSF56655">
    <property type="entry name" value="Carbohydrate phosphatase"/>
    <property type="match status" value="1"/>
</dbReference>
<reference key="1">
    <citation type="journal article" date="2006" name="Genome Res.">
        <title>Massive genome erosion and functional adaptations provide insights into the symbiotic lifestyle of Sodalis glossinidius in the tsetse host.</title>
        <authorList>
            <person name="Toh H."/>
            <person name="Weiss B.L."/>
            <person name="Perkin S.A.H."/>
            <person name="Yamashita A."/>
            <person name="Oshima K."/>
            <person name="Hattori M."/>
            <person name="Aksoy S."/>
        </authorList>
    </citation>
    <scope>NUCLEOTIDE SEQUENCE [LARGE SCALE GENOMIC DNA]</scope>
    <source>
        <strain>morsitans</strain>
    </source>
</reference>
<keyword id="KW-0119">Carbohydrate metabolism</keyword>
<keyword id="KW-0963">Cytoplasm</keyword>
<keyword id="KW-0378">Hydrolase</keyword>
<keyword id="KW-0460">Magnesium</keyword>
<keyword id="KW-0479">Metal-binding</keyword>
<comment type="catalytic activity">
    <reaction evidence="1">
        <text>beta-D-fructose 1,6-bisphosphate + H2O = beta-D-fructose 6-phosphate + phosphate</text>
        <dbReference type="Rhea" id="RHEA:11064"/>
        <dbReference type="ChEBI" id="CHEBI:15377"/>
        <dbReference type="ChEBI" id="CHEBI:32966"/>
        <dbReference type="ChEBI" id="CHEBI:43474"/>
        <dbReference type="ChEBI" id="CHEBI:57634"/>
        <dbReference type="EC" id="3.1.3.11"/>
    </reaction>
</comment>
<comment type="cofactor">
    <cofactor evidence="1">
        <name>Mg(2+)</name>
        <dbReference type="ChEBI" id="CHEBI:18420"/>
    </cofactor>
    <text evidence="1">Binds 2 magnesium ions per subunit.</text>
</comment>
<comment type="pathway">
    <text evidence="1">Carbohydrate biosynthesis; gluconeogenesis.</text>
</comment>
<comment type="subunit">
    <text evidence="1">Homotetramer.</text>
</comment>
<comment type="subcellular location">
    <subcellularLocation>
        <location evidence="1">Cytoplasm</location>
    </subcellularLocation>
</comment>
<comment type="similarity">
    <text evidence="1">Belongs to the FBPase class 1 family.</text>
</comment>
<organism>
    <name type="scientific">Sodalis glossinidius (strain morsitans)</name>
    <dbReference type="NCBI Taxonomy" id="343509"/>
    <lineage>
        <taxon>Bacteria</taxon>
        <taxon>Pseudomonadati</taxon>
        <taxon>Pseudomonadota</taxon>
        <taxon>Gammaproteobacteria</taxon>
        <taxon>Enterobacterales</taxon>
        <taxon>Bruguierivoracaceae</taxon>
        <taxon>Sodalis</taxon>
    </lineage>
</organism>
<gene>
    <name evidence="1" type="primary">fbp</name>
    <name type="ordered locus">SG0356</name>
</gene>
<evidence type="ECO:0000255" key="1">
    <source>
        <dbReference type="HAMAP-Rule" id="MF_01855"/>
    </source>
</evidence>
<proteinExistence type="inferred from homology"/>
<accession>Q2NW44</accession>
<name>F16PA_SODGM</name>